<reference key="1">
    <citation type="journal article" date="2001" name="Science">
        <title>Comparative genomics of Listeria species.</title>
        <authorList>
            <person name="Glaser P."/>
            <person name="Frangeul L."/>
            <person name="Buchrieser C."/>
            <person name="Rusniok C."/>
            <person name="Amend A."/>
            <person name="Baquero F."/>
            <person name="Berche P."/>
            <person name="Bloecker H."/>
            <person name="Brandt P."/>
            <person name="Chakraborty T."/>
            <person name="Charbit A."/>
            <person name="Chetouani F."/>
            <person name="Couve E."/>
            <person name="de Daruvar A."/>
            <person name="Dehoux P."/>
            <person name="Domann E."/>
            <person name="Dominguez-Bernal G."/>
            <person name="Duchaud E."/>
            <person name="Durant L."/>
            <person name="Dussurget O."/>
            <person name="Entian K.-D."/>
            <person name="Fsihi H."/>
            <person name="Garcia-del Portillo F."/>
            <person name="Garrido P."/>
            <person name="Gautier L."/>
            <person name="Goebel W."/>
            <person name="Gomez-Lopez N."/>
            <person name="Hain T."/>
            <person name="Hauf J."/>
            <person name="Jackson D."/>
            <person name="Jones L.-M."/>
            <person name="Kaerst U."/>
            <person name="Kreft J."/>
            <person name="Kuhn M."/>
            <person name="Kunst F."/>
            <person name="Kurapkat G."/>
            <person name="Madueno E."/>
            <person name="Maitournam A."/>
            <person name="Mata Vicente J."/>
            <person name="Ng E."/>
            <person name="Nedjari H."/>
            <person name="Nordsiek G."/>
            <person name="Novella S."/>
            <person name="de Pablos B."/>
            <person name="Perez-Diaz J.-C."/>
            <person name="Purcell R."/>
            <person name="Remmel B."/>
            <person name="Rose M."/>
            <person name="Schlueter T."/>
            <person name="Simoes N."/>
            <person name="Tierrez A."/>
            <person name="Vazquez-Boland J.-A."/>
            <person name="Voss H."/>
            <person name="Wehland J."/>
            <person name="Cossart P."/>
        </authorList>
    </citation>
    <scope>NUCLEOTIDE SEQUENCE [LARGE SCALE GENOMIC DNA]</scope>
    <source>
        <strain>ATCC BAA-679 / EGD-e</strain>
    </source>
</reference>
<feature type="chain" id="PRO_0000376515" description="Probable cell division protein WhiA">
    <location>
        <begin position="1"/>
        <end position="323"/>
    </location>
</feature>
<feature type="DNA-binding region" description="H-T-H motif" evidence="1">
    <location>
        <begin position="275"/>
        <end position="309"/>
    </location>
</feature>
<accession>Q8Y4H0</accession>
<dbReference type="EMBL" id="AL591983">
    <property type="protein sequence ID" value="CAD00550.1"/>
    <property type="molecule type" value="Genomic_DNA"/>
</dbReference>
<dbReference type="PIR" id="AH1383">
    <property type="entry name" value="AH1383"/>
</dbReference>
<dbReference type="RefSeq" id="NP_465995.1">
    <property type="nucleotide sequence ID" value="NC_003210.1"/>
</dbReference>
<dbReference type="RefSeq" id="WP_003722604.1">
    <property type="nucleotide sequence ID" value="NZ_CP149495.1"/>
</dbReference>
<dbReference type="SMR" id="Q8Y4H0"/>
<dbReference type="STRING" id="169963.gene:17595183"/>
<dbReference type="PaxDb" id="169963-lmo2472"/>
<dbReference type="EnsemblBacteria" id="CAD00550">
    <property type="protein sequence ID" value="CAD00550"/>
    <property type="gene ID" value="CAD00550"/>
</dbReference>
<dbReference type="GeneID" id="987353"/>
<dbReference type="KEGG" id="lmo:lmo2472"/>
<dbReference type="PATRIC" id="fig|169963.11.peg.2532"/>
<dbReference type="eggNOG" id="COG1481">
    <property type="taxonomic scope" value="Bacteria"/>
</dbReference>
<dbReference type="HOGENOM" id="CLU_053282_0_0_9"/>
<dbReference type="OrthoDB" id="401278at2"/>
<dbReference type="PhylomeDB" id="Q8Y4H0"/>
<dbReference type="BioCyc" id="LMON169963:LMO2472-MONOMER"/>
<dbReference type="Proteomes" id="UP000000817">
    <property type="component" value="Chromosome"/>
</dbReference>
<dbReference type="GO" id="GO:0003677">
    <property type="term" value="F:DNA binding"/>
    <property type="evidence" value="ECO:0007669"/>
    <property type="project" value="UniProtKB-UniRule"/>
</dbReference>
<dbReference type="GO" id="GO:0051301">
    <property type="term" value="P:cell division"/>
    <property type="evidence" value="ECO:0007669"/>
    <property type="project" value="UniProtKB-UniRule"/>
</dbReference>
<dbReference type="GO" id="GO:0043937">
    <property type="term" value="P:regulation of sporulation"/>
    <property type="evidence" value="ECO:0000318"/>
    <property type="project" value="GO_Central"/>
</dbReference>
<dbReference type="FunFam" id="3.10.28.10:FF:000002">
    <property type="entry name" value="Probable cell division protein WhiA"/>
    <property type="match status" value="1"/>
</dbReference>
<dbReference type="Gene3D" id="3.10.28.10">
    <property type="entry name" value="Homing endonucleases"/>
    <property type="match status" value="1"/>
</dbReference>
<dbReference type="HAMAP" id="MF_01420">
    <property type="entry name" value="HTH_type_WhiA"/>
    <property type="match status" value="1"/>
</dbReference>
<dbReference type="InterPro" id="IPR027434">
    <property type="entry name" value="Homing_endonucl"/>
</dbReference>
<dbReference type="InterPro" id="IPR018478">
    <property type="entry name" value="Sporu_reg_WhiA_N_dom"/>
</dbReference>
<dbReference type="InterPro" id="IPR003802">
    <property type="entry name" value="Sporulation_regulator_WhiA"/>
</dbReference>
<dbReference type="InterPro" id="IPR023054">
    <property type="entry name" value="Sporulation_regulator_WhiA_C"/>
</dbReference>
<dbReference type="InterPro" id="IPR039518">
    <property type="entry name" value="WhiA_LAGLIDADG_dom"/>
</dbReference>
<dbReference type="NCBIfam" id="TIGR00647">
    <property type="entry name" value="DNA_bind_WhiA"/>
    <property type="match status" value="1"/>
</dbReference>
<dbReference type="PANTHER" id="PTHR37307">
    <property type="entry name" value="CELL DIVISION PROTEIN WHIA-RELATED"/>
    <property type="match status" value="1"/>
</dbReference>
<dbReference type="PANTHER" id="PTHR37307:SF1">
    <property type="entry name" value="CELL DIVISION PROTEIN WHIA-RELATED"/>
    <property type="match status" value="1"/>
</dbReference>
<dbReference type="Pfam" id="PF02650">
    <property type="entry name" value="HTH_WhiA"/>
    <property type="match status" value="1"/>
</dbReference>
<dbReference type="Pfam" id="PF14527">
    <property type="entry name" value="LAGLIDADG_WhiA"/>
    <property type="match status" value="1"/>
</dbReference>
<dbReference type="Pfam" id="PF10298">
    <property type="entry name" value="WhiA_N"/>
    <property type="match status" value="1"/>
</dbReference>
<dbReference type="SUPFAM" id="SSF55608">
    <property type="entry name" value="Homing endonucleases"/>
    <property type="match status" value="1"/>
</dbReference>
<organism>
    <name type="scientific">Listeria monocytogenes serovar 1/2a (strain ATCC BAA-679 / EGD-e)</name>
    <dbReference type="NCBI Taxonomy" id="169963"/>
    <lineage>
        <taxon>Bacteria</taxon>
        <taxon>Bacillati</taxon>
        <taxon>Bacillota</taxon>
        <taxon>Bacilli</taxon>
        <taxon>Bacillales</taxon>
        <taxon>Listeriaceae</taxon>
        <taxon>Listeria</taxon>
    </lineage>
</organism>
<protein>
    <recommendedName>
        <fullName evidence="1">Probable cell division protein WhiA</fullName>
    </recommendedName>
</protein>
<gene>
    <name evidence="1" type="primary">whiA</name>
    <name type="ordered locus">lmo2472</name>
</gene>
<proteinExistence type="inferred from homology"/>
<comment type="function">
    <text evidence="1">Involved in cell division and chromosome segregation.</text>
</comment>
<comment type="similarity">
    <text evidence="1">Belongs to the WhiA family.</text>
</comment>
<sequence>MSFASETKKELTHMDVSDSDAKVELAAFIRMNGAISFSSQLVIMDVQTENAAIARRMYQLLKDLYEVPIELLVRRKMKLKKNNVYIVRLKSGTRGILEDLRILEPPMTFTKSIDRGFVKKRSAKRAYLRGAFLASGSVNNPETSSYHLEIFSVYEEHNEAICALMNQFDLNARTLERKNGFITYLKEAEKITEFLSIIGATSALLHFEDVRIMRDMRNSVNRLVNCETANLNKTINAAVRQIDNIKYIQSTVGLEALPERLREIAALRIANEDVTLKELGEMLTTGQVSKSGINHRLRKLDQIAERLRSGETPAQVGLKISNS</sequence>
<name>WHIA_LISMO</name>
<evidence type="ECO:0000255" key="1">
    <source>
        <dbReference type="HAMAP-Rule" id="MF_01420"/>
    </source>
</evidence>
<keyword id="KW-0131">Cell cycle</keyword>
<keyword id="KW-0132">Cell division</keyword>
<keyword id="KW-0238">DNA-binding</keyword>
<keyword id="KW-1185">Reference proteome</keyword>